<name>CUTA_ECO45</name>
<feature type="chain" id="PRO_1000137839" description="Divalent-cation tolerance protein CutA">
    <location>
        <begin position="1"/>
        <end position="112"/>
    </location>
</feature>
<feature type="binding site" evidence="1">
    <location>
        <position position="16"/>
    </location>
    <ligand>
        <name>Cu cation</name>
        <dbReference type="ChEBI" id="CHEBI:23378"/>
    </ligand>
</feature>
<feature type="binding site" evidence="1">
    <location>
        <position position="83"/>
    </location>
    <ligand>
        <name>Cu cation</name>
        <dbReference type="ChEBI" id="CHEBI:23378"/>
    </ligand>
</feature>
<feature type="binding site" evidence="1">
    <location>
        <position position="84"/>
    </location>
    <ligand>
        <name>Cu cation</name>
        <dbReference type="ChEBI" id="CHEBI:23378"/>
    </ligand>
</feature>
<organism>
    <name type="scientific">Escherichia coli O45:K1 (strain S88 / ExPEC)</name>
    <dbReference type="NCBI Taxonomy" id="585035"/>
    <lineage>
        <taxon>Bacteria</taxon>
        <taxon>Pseudomonadati</taxon>
        <taxon>Pseudomonadota</taxon>
        <taxon>Gammaproteobacteria</taxon>
        <taxon>Enterobacterales</taxon>
        <taxon>Enterobacteriaceae</taxon>
        <taxon>Escherichia</taxon>
    </lineage>
</organism>
<sequence>MLDEKSSNTTSVVVLCTAPDEATAQDLAAKVLAEKLAACATLIPGATSLYYWEGKLEQEYEVQMILKTTVSHQQALLECLKSHHPYQTPELLVLPVTHGDTDYLSWLNASLR</sequence>
<evidence type="ECO:0000255" key="1">
    <source>
        <dbReference type="HAMAP-Rule" id="MF_01160"/>
    </source>
</evidence>
<gene>
    <name evidence="1" type="primary">cutA</name>
    <name type="ordered locus">ECS88_4723</name>
</gene>
<accession>B7MKU2</accession>
<keyword id="KW-0186">Copper</keyword>
<keyword id="KW-0963">Cytoplasm</keyword>
<keyword id="KW-0479">Metal-binding</keyword>
<keyword id="KW-1185">Reference proteome</keyword>
<dbReference type="EMBL" id="CU928161">
    <property type="protein sequence ID" value="CAR05873.1"/>
    <property type="molecule type" value="Genomic_DNA"/>
</dbReference>
<dbReference type="RefSeq" id="WP_000883409.1">
    <property type="nucleotide sequence ID" value="NC_011742.1"/>
</dbReference>
<dbReference type="SMR" id="B7MKU2"/>
<dbReference type="KEGG" id="ecz:ECS88_4723"/>
<dbReference type="HOGENOM" id="CLU_098807_3_0_6"/>
<dbReference type="Proteomes" id="UP000000747">
    <property type="component" value="Chromosome"/>
</dbReference>
<dbReference type="GO" id="GO:0005737">
    <property type="term" value="C:cytoplasm"/>
    <property type="evidence" value="ECO:0007669"/>
    <property type="project" value="UniProtKB-SubCell"/>
</dbReference>
<dbReference type="GO" id="GO:0005507">
    <property type="term" value="F:copper ion binding"/>
    <property type="evidence" value="ECO:0007669"/>
    <property type="project" value="UniProtKB-UniRule"/>
</dbReference>
<dbReference type="GO" id="GO:0010038">
    <property type="term" value="P:response to metal ion"/>
    <property type="evidence" value="ECO:0007669"/>
    <property type="project" value="InterPro"/>
</dbReference>
<dbReference type="FunFam" id="3.30.70.120:FF:000004">
    <property type="entry name" value="Divalent-cation tolerance protein CutA"/>
    <property type="match status" value="1"/>
</dbReference>
<dbReference type="Gene3D" id="3.30.70.120">
    <property type="match status" value="1"/>
</dbReference>
<dbReference type="HAMAP" id="MF_01160">
    <property type="entry name" value="CutA"/>
    <property type="match status" value="1"/>
</dbReference>
<dbReference type="InterPro" id="IPR023700">
    <property type="entry name" value="CutA_Enterobact"/>
</dbReference>
<dbReference type="InterPro" id="IPR004323">
    <property type="entry name" value="Ion_tolerance_CutA"/>
</dbReference>
<dbReference type="InterPro" id="IPR011322">
    <property type="entry name" value="N-reg_PII-like_a/b"/>
</dbReference>
<dbReference type="InterPro" id="IPR015867">
    <property type="entry name" value="N-reg_PII/ATP_PRibTrfase_C"/>
</dbReference>
<dbReference type="NCBIfam" id="NF007930">
    <property type="entry name" value="PRK10645.1"/>
    <property type="match status" value="1"/>
</dbReference>
<dbReference type="PANTHER" id="PTHR23419">
    <property type="entry name" value="DIVALENT CATION TOLERANCE CUTA-RELATED"/>
    <property type="match status" value="1"/>
</dbReference>
<dbReference type="PANTHER" id="PTHR23419:SF8">
    <property type="entry name" value="FI09726P"/>
    <property type="match status" value="1"/>
</dbReference>
<dbReference type="Pfam" id="PF03091">
    <property type="entry name" value="CutA1"/>
    <property type="match status" value="1"/>
</dbReference>
<dbReference type="SUPFAM" id="SSF54913">
    <property type="entry name" value="GlnB-like"/>
    <property type="match status" value="1"/>
</dbReference>
<reference key="1">
    <citation type="journal article" date="2009" name="PLoS Genet.">
        <title>Organised genome dynamics in the Escherichia coli species results in highly diverse adaptive paths.</title>
        <authorList>
            <person name="Touchon M."/>
            <person name="Hoede C."/>
            <person name="Tenaillon O."/>
            <person name="Barbe V."/>
            <person name="Baeriswyl S."/>
            <person name="Bidet P."/>
            <person name="Bingen E."/>
            <person name="Bonacorsi S."/>
            <person name="Bouchier C."/>
            <person name="Bouvet O."/>
            <person name="Calteau A."/>
            <person name="Chiapello H."/>
            <person name="Clermont O."/>
            <person name="Cruveiller S."/>
            <person name="Danchin A."/>
            <person name="Diard M."/>
            <person name="Dossat C."/>
            <person name="Karoui M.E."/>
            <person name="Frapy E."/>
            <person name="Garry L."/>
            <person name="Ghigo J.M."/>
            <person name="Gilles A.M."/>
            <person name="Johnson J."/>
            <person name="Le Bouguenec C."/>
            <person name="Lescat M."/>
            <person name="Mangenot S."/>
            <person name="Martinez-Jehanne V."/>
            <person name="Matic I."/>
            <person name="Nassif X."/>
            <person name="Oztas S."/>
            <person name="Petit M.A."/>
            <person name="Pichon C."/>
            <person name="Rouy Z."/>
            <person name="Ruf C.S."/>
            <person name="Schneider D."/>
            <person name="Tourret J."/>
            <person name="Vacherie B."/>
            <person name="Vallenet D."/>
            <person name="Medigue C."/>
            <person name="Rocha E.P.C."/>
            <person name="Denamur E."/>
        </authorList>
    </citation>
    <scope>NUCLEOTIDE SEQUENCE [LARGE SCALE GENOMIC DNA]</scope>
    <source>
        <strain>S88 / ExPEC</strain>
    </source>
</reference>
<comment type="function">
    <text evidence="1">Involved in resistance toward heavy metals.</text>
</comment>
<comment type="cofactor">
    <cofactor evidence="1">
        <name>Cu cation</name>
        <dbReference type="ChEBI" id="CHEBI:23378"/>
    </cofactor>
    <text evidence="1">Binds 1 copper ion per subunit.</text>
</comment>
<comment type="subunit">
    <text evidence="1">Homotrimer.</text>
</comment>
<comment type="subcellular location">
    <subcellularLocation>
        <location evidence="1">Cytoplasm</location>
    </subcellularLocation>
</comment>
<comment type="similarity">
    <text evidence="1">Belongs to the CutA family.</text>
</comment>
<protein>
    <recommendedName>
        <fullName evidence="1">Divalent-cation tolerance protein CutA</fullName>
    </recommendedName>
</protein>
<proteinExistence type="inferred from homology"/>